<organismHost>
    <name type="scientific">Homo sapiens</name>
    <name type="common">Human</name>
    <dbReference type="NCBI Taxonomy" id="9606"/>
</organismHost>
<comment type="function">
    <text evidence="1">Plays a major role in antagonizing the type I IFN-mediated antiviral response by degrading or inhibiting multiple cellular factors required for either IFN induction or response pathways. Acts cooperatively with NS2 to repress activation and nuclear translocation of host IFN-regulatory factor IRF3. Also disrupts the association of IRF3 with CREBBP. Interacts with host mitochondrial-associated membrane (MAM) MAVS and prevents the interaction with RIGI. Interacts with TRIM25 to suppress TRIM25-mediated RIGI ubiquitination and thereby RIGI-MAVS interaction. Together with NS2, participates in the proteasomal degradation of host STAT2, IRF3, IRF7, TBK1 and RIGI through a NS-degradasome involving CUL2 and Elongin-C. The degradasome requires an intact mitochondrial MAVS. Decreases the levels of host TRAF3 and IKBKE/IKK-epsilon. As functions other than disruptions of the type I IFN-mediated antiviral signaling pathways, induces host SOCS1 and SOCS3 expression. Suppresses premature apoptosis by an NF-kappa-B-dependent, interferon-independent mechanism and thus facilitates virus growth. Additionally, NS1 may serve some inhibitory role in viral transcription and RNA replication. Suppresses proliferation and activation of host CD103+ CD8+ cytotoxic T-lymphocytes and Th17 helper T-lymphocytes.</text>
</comment>
<comment type="subunit">
    <text evidence="1">Monomer. Homomultimer. Heteromultimer with NS2. Interacts with the matrix protein M. Interacts with host ELOC and CUL2; this interaction allows NS1 to form an active E3 ligase with ELOC and CUL2. Interacts with host IRF3; this interaction leads to the disrupted association of IRF3 with CREBBP and thus reduced binding of IRF3 to the IFN-beta promoter. Interacts with host MAVS; this interaction prevents MAVS binding to RIGI and inhibits signaling pathway leading to interferon production. Interacts with host MAP1B/microtubule-associated protein 1B. Interacts with host TRIM25 (via SPRY domain); this interaction suppresses RIGI ubiquitination and results in decreased interaction between RIGI and MAVS.</text>
</comment>
<comment type="subcellular location">
    <subcellularLocation>
        <location evidence="1">Host cytoplasm</location>
    </subcellularLocation>
    <subcellularLocation>
        <location evidence="1">Host mitochondrion</location>
    </subcellularLocation>
    <subcellularLocation>
        <location evidence="1">Host nucleus</location>
    </subcellularLocation>
    <text evidence="1">Most NS1 resides in the mitochondria as a heteromer with NS2.</text>
</comment>
<comment type="domain">
    <text evidence="1">N-terminus is important for IKBKE/IKK-epsilon reduction. The DNLP motif has IFN suppressive functions like binding to host MAP1B.</text>
</comment>
<comment type="similarity">
    <text evidence="2">Belongs to the pneumovirus non-structural protein 1 family.</text>
</comment>
<name>NS1_HRSS2</name>
<protein>
    <recommendedName>
        <fullName>Non-structural protein 1</fullName>
        <shortName>NS1</shortName>
    </recommendedName>
    <alternativeName>
        <fullName>Non-structural protein 1C</fullName>
    </alternativeName>
</protein>
<reference key="1">
    <citation type="journal article" date="1996" name="Vaccine">
        <title>Identification of mutations contributing to the reduced virulence of a modified strain of respiratory syncytial virus.</title>
        <authorList>
            <person name="Tolley K.P."/>
            <person name="Marriott A.C."/>
            <person name="Simpson A."/>
            <person name="Plows D.J."/>
            <person name="Matthews D.A."/>
            <person name="Longhurst S.J."/>
            <person name="Evans J.E."/>
            <person name="Johnson J.L."/>
            <person name="Cane P.A."/>
            <person name="Easton A.J."/>
            <person name="Pringle C.R."/>
        </authorList>
    </citation>
    <scope>NUCLEOTIDE SEQUENCE [GENOMIC RNA]</scope>
</reference>
<reference key="2">
    <citation type="journal article" date="2019" name="PLoS Pathog.">
        <title>Respiratory syncytial virus nonstructural proteins 1 and 2: Exceptional disrupters of innate immune responses.</title>
        <authorList>
            <person name="Sedeyn K."/>
            <person name="Schepens B."/>
            <person name="Saelens X."/>
        </authorList>
    </citation>
    <scope>REVIEW</scope>
</reference>
<reference key="3">
    <citation type="journal article" date="2020" name="Front. Cell. Infect. Microbiol.">
        <title>Respiratory Syncytial Virus's Non-structural Proteins: Masters of Interference.</title>
        <authorList>
            <person name="Thornhill E.M."/>
            <person name="Verhoeven D."/>
        </authorList>
    </citation>
    <scope>REVIEW</scope>
</reference>
<keyword id="KW-1035">Host cytoplasm</keyword>
<keyword id="KW-1045">Host mitochondrion</keyword>
<keyword id="KW-1048">Host nucleus</keyword>
<keyword id="KW-0945">Host-virus interaction</keyword>
<keyword id="KW-1080">Inhibition of host adaptive immune response by virus</keyword>
<keyword id="KW-1090">Inhibition of host innate immune response by virus</keyword>
<keyword id="KW-1114">Inhibition of host interferon signaling pathway by virus</keyword>
<keyword id="KW-1092">Inhibition of host IRF3 by virus</keyword>
<keyword id="KW-1093">Inhibition of host IRF7 by virus</keyword>
<keyword id="KW-1097">Inhibition of host MAVS by virus</keyword>
<keyword id="KW-1088">Inhibition of host RIG-I by virus</keyword>
<keyword id="KW-1113">Inhibition of host RLR pathway by virus</keyword>
<keyword id="KW-1106">Inhibition of host STAT2 by virus</keyword>
<keyword id="KW-1223">Inhibition of host TBK1 by virus</keyword>
<keyword id="KW-1225">Inhibition of host TLR pathway by virus</keyword>
<keyword id="KW-0922">Interferon antiviral system evasion</keyword>
<keyword id="KW-1119">Modulation of host cell apoptosis by virus</keyword>
<keyword id="KW-0899">Viral immunoevasion</keyword>
<organism>
    <name type="scientific">Human respiratory syncytial virus A (strain S-2)</name>
    <name type="common">HRSV-S2</name>
    <dbReference type="NCBI Taxonomy" id="410078"/>
    <lineage>
        <taxon>Viruses</taxon>
        <taxon>Riboviria</taxon>
        <taxon>Orthornavirae</taxon>
        <taxon>Negarnaviricota</taxon>
        <taxon>Haploviricotina</taxon>
        <taxon>Monjiviricetes</taxon>
        <taxon>Mononegavirales</taxon>
        <taxon>Pneumoviridae</taxon>
        <taxon>Orthopneumovirus</taxon>
        <taxon>Orthopneumovirus hominis</taxon>
    </lineage>
</organism>
<dbReference type="EMBL" id="U39662">
    <property type="protein sequence ID" value="AAC57020.1"/>
    <property type="molecule type" value="Genomic_RNA"/>
</dbReference>
<dbReference type="SMR" id="P0DOE8"/>
<dbReference type="Proteomes" id="UP000113393">
    <property type="component" value="Genome"/>
</dbReference>
<dbReference type="GO" id="GO:0033650">
    <property type="term" value="C:host cell mitochondrion"/>
    <property type="evidence" value="ECO:0007669"/>
    <property type="project" value="UniProtKB-SubCell"/>
</dbReference>
<dbReference type="GO" id="GO:0042025">
    <property type="term" value="C:host cell nucleus"/>
    <property type="evidence" value="ECO:0007669"/>
    <property type="project" value="UniProtKB-SubCell"/>
</dbReference>
<dbReference type="GO" id="GO:0052150">
    <property type="term" value="P:symbiont-mediated perturbation of host apoptosis"/>
    <property type="evidence" value="ECO:0007669"/>
    <property type="project" value="UniProtKB-KW"/>
</dbReference>
<dbReference type="GO" id="GO:0039504">
    <property type="term" value="P:symbiont-mediated suppression of host adaptive immune response"/>
    <property type="evidence" value="ECO:0007669"/>
    <property type="project" value="UniProtKB-KW"/>
</dbReference>
<dbReference type="GO" id="GO:0039548">
    <property type="term" value="P:symbiont-mediated suppression of host cytoplasmic pattern recognition receptor signaling pathway via inhibition of IRF3 activity"/>
    <property type="evidence" value="ECO:0007669"/>
    <property type="project" value="UniProtKB-KW"/>
</dbReference>
<dbReference type="GO" id="GO:0039557">
    <property type="term" value="P:symbiont-mediated suppression of host cytoplasmic pattern recognition receptor signaling pathway via inhibition of IRF7 activity"/>
    <property type="evidence" value="ECO:0007669"/>
    <property type="project" value="UniProtKB-KW"/>
</dbReference>
<dbReference type="GO" id="GO:0039545">
    <property type="term" value="P:symbiont-mediated suppression of host cytoplasmic pattern recognition receptor signaling pathway via inhibition of MAVS activity"/>
    <property type="evidence" value="ECO:0007669"/>
    <property type="project" value="UniProtKB-KW"/>
</dbReference>
<dbReference type="GO" id="GO:0039540">
    <property type="term" value="P:symbiont-mediated suppression of host cytoplasmic pattern recognition receptor signaling pathway via inhibition of RIG-I activity"/>
    <property type="evidence" value="ECO:0007669"/>
    <property type="project" value="UniProtKB-KW"/>
</dbReference>
<dbReference type="GO" id="GO:0039723">
    <property type="term" value="P:symbiont-mediated suppression of host cytoplasmic pattern recognition receptor signaling pathway via inhibition of TBK1 activity"/>
    <property type="evidence" value="ECO:0007669"/>
    <property type="project" value="UniProtKB-KW"/>
</dbReference>
<dbReference type="GO" id="GO:0039564">
    <property type="term" value="P:symbiont-mediated suppression of host JAK-STAT cascade via inhibition of STAT2 activity"/>
    <property type="evidence" value="ECO:0007669"/>
    <property type="project" value="UniProtKB-KW"/>
</dbReference>
<dbReference type="GO" id="GO:0039722">
    <property type="term" value="P:symbiont-mediated suppression of host toll-like receptor signaling pathway"/>
    <property type="evidence" value="ECO:0007669"/>
    <property type="project" value="UniProtKB-KW"/>
</dbReference>
<dbReference type="GO" id="GO:0039502">
    <property type="term" value="P:symbiont-mediated suppression of host type I interferon-mediated signaling pathway"/>
    <property type="evidence" value="ECO:0007669"/>
    <property type="project" value="UniProtKB-KW"/>
</dbReference>
<dbReference type="InterPro" id="IPR005099">
    <property type="entry name" value="Pneumo_NS1"/>
</dbReference>
<dbReference type="Pfam" id="PF03438">
    <property type="entry name" value="Pneumo_NS1"/>
    <property type="match status" value="1"/>
</dbReference>
<sequence>MGSNSLSMIKVRLQNLFDNDEVALLKITCYTDKLIHLTNALAKAVIHTIKLNGIVFVHVITSSDICPNNNIVVKSNFTTMPVLQNGGYIWEMMELTHCSQPNGLLDDNCEIKFSKKLSDSTMTNYMNQLSELLGFDLNP</sequence>
<gene>
    <name type="primary">1C</name>
    <name type="synonym">NS1</name>
</gene>
<feature type="chain" id="PRO_0000439634" description="Non-structural protein 1">
    <location>
        <begin position="1"/>
        <end position="139"/>
    </location>
</feature>
<feature type="short sequence motif" description="DLNP; interaction with MAP1B" evidence="1">
    <location>
        <begin position="136"/>
        <end position="139"/>
    </location>
</feature>
<proteinExistence type="inferred from homology"/>
<evidence type="ECO:0000250" key="1">
    <source>
        <dbReference type="UniProtKB" id="P0DOE9"/>
    </source>
</evidence>
<evidence type="ECO:0000305" key="2"/>
<accession>P0DOE8</accession>
<accession>P04544</accession>
<accession>Q77YB7</accession>